<comment type="function">
    <text evidence="1">Part of a membrane-bound complex that couples electron transfer with translocation of ions across the membrane.</text>
</comment>
<comment type="subunit">
    <text evidence="1">The complex is composed of six subunits: RnfA, RnfB, RnfC, RnfD, RnfE and RnfG.</text>
</comment>
<comment type="subcellular location">
    <subcellularLocation>
        <location evidence="1">Cell inner membrane</location>
        <topology evidence="1">Multi-pass membrane protein</topology>
    </subcellularLocation>
</comment>
<comment type="similarity">
    <text evidence="1">Belongs to the NqrDE/RnfAE family.</text>
</comment>
<sequence length="240" mass="25795">MSEQDFREIARNGLWRNNPGLVQLLGLCPLLGTSNSTVNALGLGLATMLVLACSNAAVSLVRGAVSEAIRLPAFVMIIAVLTTCIELLMQAWTYELYQVLGIFIPLITTNCVILGRAEAFAAKNGVLRASFDGLLMGLGFALVLLVLGGLRELLGQGTLLADMHLLFGPAAADWKIQPFPQYQGFLLAILPPGAFIMLGLLIALKNRIDESLAERAKVQAGDVPATQRQRQRVRVTGVIE</sequence>
<accession>Q9HYB5</accession>
<evidence type="ECO:0000255" key="1">
    <source>
        <dbReference type="HAMAP-Rule" id="MF_00478"/>
    </source>
</evidence>
<reference key="1">
    <citation type="journal article" date="2000" name="Nature">
        <title>Complete genome sequence of Pseudomonas aeruginosa PAO1, an opportunistic pathogen.</title>
        <authorList>
            <person name="Stover C.K."/>
            <person name="Pham X.-Q.T."/>
            <person name="Erwin A.L."/>
            <person name="Mizoguchi S.D."/>
            <person name="Warrener P."/>
            <person name="Hickey M.J."/>
            <person name="Brinkman F.S.L."/>
            <person name="Hufnagle W.O."/>
            <person name="Kowalik D.J."/>
            <person name="Lagrou M."/>
            <person name="Garber R.L."/>
            <person name="Goltry L."/>
            <person name="Tolentino E."/>
            <person name="Westbrock-Wadman S."/>
            <person name="Yuan Y."/>
            <person name="Brody L.L."/>
            <person name="Coulter S.N."/>
            <person name="Folger K.R."/>
            <person name="Kas A."/>
            <person name="Larbig K."/>
            <person name="Lim R.M."/>
            <person name="Smith K.A."/>
            <person name="Spencer D.H."/>
            <person name="Wong G.K.-S."/>
            <person name="Wu Z."/>
            <person name="Paulsen I.T."/>
            <person name="Reizer J."/>
            <person name="Saier M.H. Jr."/>
            <person name="Hancock R.E.W."/>
            <person name="Lory S."/>
            <person name="Olson M.V."/>
        </authorList>
    </citation>
    <scope>NUCLEOTIDE SEQUENCE [LARGE SCALE GENOMIC DNA]</scope>
    <source>
        <strain>ATCC 15692 / DSM 22644 / CIP 104116 / JCM 14847 / LMG 12228 / 1C / PRS 101 / PAO1</strain>
    </source>
</reference>
<protein>
    <recommendedName>
        <fullName evidence="1">Ion-translocating oxidoreductase complex subunit E</fullName>
        <ecNumber evidence="1">7.-.-.-</ecNumber>
    </recommendedName>
    <alternativeName>
        <fullName evidence="1">Rnf electron transport complex subunit E</fullName>
    </alternativeName>
</protein>
<feature type="chain" id="PRO_0000214275" description="Ion-translocating oxidoreductase complex subunit E">
    <location>
        <begin position="1"/>
        <end position="240"/>
    </location>
</feature>
<feature type="transmembrane region" description="Helical" evidence="1">
    <location>
        <begin position="41"/>
        <end position="61"/>
    </location>
</feature>
<feature type="transmembrane region" description="Helical" evidence="1">
    <location>
        <begin position="71"/>
        <end position="91"/>
    </location>
</feature>
<feature type="transmembrane region" description="Helical" evidence="1">
    <location>
        <begin position="95"/>
        <end position="115"/>
    </location>
</feature>
<feature type="transmembrane region" description="Helical" evidence="1">
    <location>
        <begin position="130"/>
        <end position="150"/>
    </location>
</feature>
<feature type="transmembrane region" description="Helical" evidence="1">
    <location>
        <begin position="184"/>
        <end position="204"/>
    </location>
</feature>
<organism>
    <name type="scientific">Pseudomonas aeruginosa (strain ATCC 15692 / DSM 22644 / CIP 104116 / JCM 14847 / LMG 12228 / 1C / PRS 101 / PAO1)</name>
    <dbReference type="NCBI Taxonomy" id="208964"/>
    <lineage>
        <taxon>Bacteria</taxon>
        <taxon>Pseudomonadati</taxon>
        <taxon>Pseudomonadota</taxon>
        <taxon>Gammaproteobacteria</taxon>
        <taxon>Pseudomonadales</taxon>
        <taxon>Pseudomonadaceae</taxon>
        <taxon>Pseudomonas</taxon>
    </lineage>
</organism>
<dbReference type="EC" id="7.-.-.-" evidence="1"/>
<dbReference type="EMBL" id="AE004091">
    <property type="protein sequence ID" value="AAG06882.1"/>
    <property type="molecule type" value="Genomic_DNA"/>
</dbReference>
<dbReference type="PIR" id="G83208">
    <property type="entry name" value="G83208"/>
</dbReference>
<dbReference type="RefSeq" id="NP_252184.1">
    <property type="nucleotide sequence ID" value="NC_002516.2"/>
</dbReference>
<dbReference type="RefSeq" id="WP_003112914.1">
    <property type="nucleotide sequence ID" value="NZ_QZGE01000001.1"/>
</dbReference>
<dbReference type="SMR" id="Q9HYB5"/>
<dbReference type="FunCoup" id="Q9HYB5">
    <property type="interactions" value="156"/>
</dbReference>
<dbReference type="STRING" id="208964.PA3494"/>
<dbReference type="PaxDb" id="208964-PA3494"/>
<dbReference type="DNASU" id="879980"/>
<dbReference type="GeneID" id="879980"/>
<dbReference type="KEGG" id="pae:PA3494"/>
<dbReference type="PATRIC" id="fig|208964.12.peg.3658"/>
<dbReference type="PseudoCAP" id="PA3494"/>
<dbReference type="HOGENOM" id="CLU_046659_1_0_6"/>
<dbReference type="InParanoid" id="Q9HYB5"/>
<dbReference type="OrthoDB" id="9782945at2"/>
<dbReference type="PhylomeDB" id="Q9HYB5"/>
<dbReference type="BioCyc" id="PAER208964:G1FZ6-3562-MONOMER"/>
<dbReference type="Proteomes" id="UP000002438">
    <property type="component" value="Chromosome"/>
</dbReference>
<dbReference type="GO" id="GO:0005886">
    <property type="term" value="C:plasma membrane"/>
    <property type="evidence" value="ECO:0000318"/>
    <property type="project" value="GO_Central"/>
</dbReference>
<dbReference type="GO" id="GO:0022900">
    <property type="term" value="P:electron transport chain"/>
    <property type="evidence" value="ECO:0007669"/>
    <property type="project" value="UniProtKB-UniRule"/>
</dbReference>
<dbReference type="HAMAP" id="MF_00478">
    <property type="entry name" value="RsxE_RnfE"/>
    <property type="match status" value="1"/>
</dbReference>
<dbReference type="InterPro" id="IPR003667">
    <property type="entry name" value="NqrDE/RnfAE"/>
</dbReference>
<dbReference type="InterPro" id="IPR010968">
    <property type="entry name" value="RnfE"/>
</dbReference>
<dbReference type="NCBIfam" id="NF009070">
    <property type="entry name" value="PRK12405.1"/>
    <property type="match status" value="1"/>
</dbReference>
<dbReference type="NCBIfam" id="TIGR01948">
    <property type="entry name" value="rnfE"/>
    <property type="match status" value="1"/>
</dbReference>
<dbReference type="PANTHER" id="PTHR30586">
    <property type="entry name" value="ELECTRON TRANSPORT COMPLEX PROTEIN RNFE"/>
    <property type="match status" value="1"/>
</dbReference>
<dbReference type="PANTHER" id="PTHR30586:SF0">
    <property type="entry name" value="ION-TRANSLOCATING OXIDOREDUCTASE COMPLEX SUBUNIT E"/>
    <property type="match status" value="1"/>
</dbReference>
<dbReference type="Pfam" id="PF02508">
    <property type="entry name" value="Rnf-Nqr"/>
    <property type="match status" value="1"/>
</dbReference>
<dbReference type="PIRSF" id="PIRSF006102">
    <property type="entry name" value="NQR_DE"/>
    <property type="match status" value="1"/>
</dbReference>
<gene>
    <name evidence="1" type="primary">rnfE</name>
    <name type="ordered locus">PA3494</name>
</gene>
<keyword id="KW-0997">Cell inner membrane</keyword>
<keyword id="KW-1003">Cell membrane</keyword>
<keyword id="KW-0249">Electron transport</keyword>
<keyword id="KW-0472">Membrane</keyword>
<keyword id="KW-1185">Reference proteome</keyword>
<keyword id="KW-1278">Translocase</keyword>
<keyword id="KW-0812">Transmembrane</keyword>
<keyword id="KW-1133">Transmembrane helix</keyword>
<keyword id="KW-0813">Transport</keyword>
<proteinExistence type="inferred from homology"/>
<name>RNFE_PSEAE</name>